<comment type="function">
    <text>Required for the secretion of flagellin and expression of motility.</text>
</comment>
<comment type="similarity">
    <text evidence="1">Belongs to the FliB family.</text>
</comment>
<comment type="caution">
    <text evidence="1">Corresponds to the C-terminal section. Unlike the other Salmonellae, the ortholog of the FliB protein may be encoded by two CDS in S.muenchen. It cannot be ruled out that sequencing errors produced two CDS instead of one.</text>
</comment>
<reference key="1">
    <citation type="journal article" date="1993" name="Gene">
        <title>Cloning and sequencing of two new fli genes, the products of which are essential for Salmonella flagellar biosynthesis.</title>
        <authorList>
            <person name="Doll L."/>
            <person name="Frankel G."/>
        </authorList>
    </citation>
    <scope>NUCLEOTIDE SEQUENCE [GENOMIC DNA]</scope>
    <source>
        <strain>ATCC 8388</strain>
    </source>
</reference>
<reference key="2">
    <citation type="journal article" date="1993" name="J. Gen. Microbiol.">
        <title>fliU and fliV: two flagellar genes essential for biosynthesis of Salmonella and Escherichia coli flagella.</title>
        <authorList>
            <person name="Doll L."/>
            <person name="Frankel G."/>
        </authorList>
    </citation>
    <scope>CHARACTERIZATION</scope>
</reference>
<feature type="chain" id="PRO_0000219869" description="Flagellar biosynthetic protein FliV">
    <location>
        <begin position="1"/>
        <end position="173"/>
    </location>
</feature>
<accession>P37588</accession>
<name>FLIV_SALMU</name>
<evidence type="ECO:0000305" key="1"/>
<dbReference type="EMBL" id="L06521">
    <property type="protein sequence ID" value="AAA27107.1"/>
    <property type="molecule type" value="Genomic_DNA"/>
</dbReference>
<dbReference type="GO" id="GO:0044781">
    <property type="term" value="P:bacterial-type flagellum organization"/>
    <property type="evidence" value="ECO:0007669"/>
    <property type="project" value="UniProtKB-KW"/>
</dbReference>
<sequence length="173" mass="19982">MNIAPDSKVKTSLVLQMQNYFRSLPLNRGSVILDHYIQCLLRVLTAEEGVSMEQKVSDIESSLARCLQADEQQKNWAFRNLILYKIWENNLGNQPNVDPLRALYIIVAEYAFIKLLTAASVHERGRLEWDDVTNIVYSFHSRSQHNSEVAKNFHRHIETVRTGDDLSMIHLLT</sequence>
<proteinExistence type="evidence at protein level"/>
<keyword id="KW-1005">Bacterial flagellum biogenesis</keyword>
<organism>
    <name type="scientific">Salmonella muenchen</name>
    <dbReference type="NCBI Taxonomy" id="596"/>
    <lineage>
        <taxon>Bacteria</taxon>
        <taxon>Pseudomonadati</taxon>
        <taxon>Pseudomonadota</taxon>
        <taxon>Gammaproteobacteria</taxon>
        <taxon>Enterobacterales</taxon>
        <taxon>Enterobacteriaceae</taxon>
        <taxon>Salmonella</taxon>
    </lineage>
</organism>
<protein>
    <recommendedName>
        <fullName>Flagellar biosynthetic protein FliV</fullName>
    </recommendedName>
</protein>
<gene>
    <name type="primary">fliV</name>
</gene>